<dbReference type="EC" id="1.4.4.2" evidence="1"/>
<dbReference type="EMBL" id="CP000703">
    <property type="protein sequence ID" value="ABQ49387.1"/>
    <property type="molecule type" value="Genomic_DNA"/>
</dbReference>
<dbReference type="RefSeq" id="WP_000019691.1">
    <property type="nucleotide sequence ID" value="NC_009487.1"/>
</dbReference>
<dbReference type="SMR" id="A5IT64"/>
<dbReference type="KEGG" id="saj:SaurJH9_1594"/>
<dbReference type="HOGENOM" id="CLU_004620_0_2_9"/>
<dbReference type="GO" id="GO:0004375">
    <property type="term" value="F:glycine dehydrogenase (decarboxylating) activity"/>
    <property type="evidence" value="ECO:0007669"/>
    <property type="project" value="UniProtKB-EC"/>
</dbReference>
<dbReference type="GO" id="GO:0019464">
    <property type="term" value="P:glycine decarboxylation via glycine cleavage system"/>
    <property type="evidence" value="ECO:0007669"/>
    <property type="project" value="UniProtKB-UniRule"/>
</dbReference>
<dbReference type="GO" id="GO:0009116">
    <property type="term" value="P:nucleoside metabolic process"/>
    <property type="evidence" value="ECO:0007669"/>
    <property type="project" value="InterPro"/>
</dbReference>
<dbReference type="CDD" id="cd00613">
    <property type="entry name" value="GDC-P"/>
    <property type="match status" value="1"/>
</dbReference>
<dbReference type="Gene3D" id="3.90.1150.10">
    <property type="entry name" value="Aspartate Aminotransferase, domain 1"/>
    <property type="match status" value="1"/>
</dbReference>
<dbReference type="Gene3D" id="3.40.640.10">
    <property type="entry name" value="Type I PLP-dependent aspartate aminotransferase-like (Major domain)"/>
    <property type="match status" value="1"/>
</dbReference>
<dbReference type="HAMAP" id="MF_00712">
    <property type="entry name" value="GcvPA"/>
    <property type="match status" value="1"/>
</dbReference>
<dbReference type="InterPro" id="IPR023010">
    <property type="entry name" value="GcvPA"/>
</dbReference>
<dbReference type="InterPro" id="IPR049315">
    <property type="entry name" value="GDC-P_N"/>
</dbReference>
<dbReference type="InterPro" id="IPR020581">
    <property type="entry name" value="GDC_P"/>
</dbReference>
<dbReference type="InterPro" id="IPR015424">
    <property type="entry name" value="PyrdxlP-dep_Trfase"/>
</dbReference>
<dbReference type="InterPro" id="IPR015421">
    <property type="entry name" value="PyrdxlP-dep_Trfase_major"/>
</dbReference>
<dbReference type="InterPro" id="IPR015422">
    <property type="entry name" value="PyrdxlP-dep_Trfase_small"/>
</dbReference>
<dbReference type="NCBIfam" id="NF001696">
    <property type="entry name" value="PRK00451.1"/>
    <property type="match status" value="1"/>
</dbReference>
<dbReference type="PANTHER" id="PTHR42806">
    <property type="entry name" value="GLYCINE CLEAVAGE SYSTEM P-PROTEIN"/>
    <property type="match status" value="1"/>
</dbReference>
<dbReference type="PANTHER" id="PTHR42806:SF1">
    <property type="entry name" value="GLYCINE DEHYDROGENASE (DECARBOXYLATING)"/>
    <property type="match status" value="1"/>
</dbReference>
<dbReference type="Pfam" id="PF02347">
    <property type="entry name" value="GDC-P"/>
    <property type="match status" value="1"/>
</dbReference>
<dbReference type="PIRSF" id="PIRSF006815">
    <property type="entry name" value="GcvPA"/>
    <property type="match status" value="1"/>
</dbReference>
<dbReference type="SUPFAM" id="SSF53383">
    <property type="entry name" value="PLP-dependent transferases"/>
    <property type="match status" value="1"/>
</dbReference>
<protein>
    <recommendedName>
        <fullName evidence="1">Probable glycine dehydrogenase (decarboxylating) subunit 1</fullName>
        <ecNumber evidence="1">1.4.4.2</ecNumber>
    </recommendedName>
    <alternativeName>
        <fullName evidence="1">Glycine cleavage system P-protein subunit 1</fullName>
    </alternativeName>
    <alternativeName>
        <fullName evidence="1">Glycine decarboxylase subunit 1</fullName>
    </alternativeName>
    <alternativeName>
        <fullName evidence="1">Glycine dehydrogenase (aminomethyl-transferring) subunit 1</fullName>
    </alternativeName>
</protein>
<name>GCSPA_STAA9</name>
<gene>
    <name evidence="1" type="primary">gcvPA</name>
    <name type="ordered locus">SaurJH9_1594</name>
</gene>
<proteinExistence type="inferred from homology"/>
<feature type="chain" id="PRO_1000083226" description="Probable glycine dehydrogenase (decarboxylating) subunit 1">
    <location>
        <begin position="1"/>
        <end position="448"/>
    </location>
</feature>
<sequence>MSHRYIPLTEKDKQEMLQTIGAKSIGELFGDVPSDILLNRDLNIAEGEAETTLLRRLNRIASKNITKETHTSFLGAGVYDHYAPSVVDAMISRSEFYTAYTPYQPEISQGELQAIFEFQTLICELTDMDVANSSMYDGMTSFAEACILAFSQTKKNKIVVSKGLHYQALQVLHTYAKTRKEFEVVEIDLDGTVTDLKKLEAAVDDETAAVAVQYPNFYGSIEDLEKIQSFIEDKKALFIVYANPLALGLLTPPGSFGADIVVGDTQPFGIPAQFGGPHCGYFATTKKLMRKVPGRLVGQTQDDEGNRGFVLTLQAREQHIRRDKATSNICSNQALNALASSIAMSALGKQGIYDIAVQNIEHANYAKQQFIKKGFEVLDGTSFNEFVVKFDKPIQQVNEELVKYNIIGGFDLGVVSDDFKNHMLIAVTELRTKDEIDTFVEKAGELND</sequence>
<accession>A5IT64</accession>
<evidence type="ECO:0000255" key="1">
    <source>
        <dbReference type="HAMAP-Rule" id="MF_00712"/>
    </source>
</evidence>
<reference key="1">
    <citation type="submission" date="2007-05" db="EMBL/GenBank/DDBJ databases">
        <title>Complete sequence of chromosome of Staphylococcus aureus subsp. aureus JH9.</title>
        <authorList>
            <consortium name="US DOE Joint Genome Institute"/>
            <person name="Copeland A."/>
            <person name="Lucas S."/>
            <person name="Lapidus A."/>
            <person name="Barry K."/>
            <person name="Detter J.C."/>
            <person name="Glavina del Rio T."/>
            <person name="Hammon N."/>
            <person name="Israni S."/>
            <person name="Pitluck S."/>
            <person name="Chain P."/>
            <person name="Malfatti S."/>
            <person name="Shin M."/>
            <person name="Vergez L."/>
            <person name="Schmutz J."/>
            <person name="Larimer F."/>
            <person name="Land M."/>
            <person name="Hauser L."/>
            <person name="Kyrpides N."/>
            <person name="Kim E."/>
            <person name="Tomasz A."/>
            <person name="Richardson P."/>
        </authorList>
    </citation>
    <scope>NUCLEOTIDE SEQUENCE [LARGE SCALE GENOMIC DNA]</scope>
    <source>
        <strain>JH9</strain>
    </source>
</reference>
<keyword id="KW-0560">Oxidoreductase</keyword>
<comment type="function">
    <text evidence="1">The glycine cleavage system catalyzes the degradation of glycine. The P protein binds the alpha-amino group of glycine through its pyridoxal phosphate cofactor; CO(2) is released and the remaining methylamine moiety is then transferred to the lipoamide cofactor of the H protein.</text>
</comment>
<comment type="catalytic activity">
    <reaction evidence="1">
        <text>N(6)-[(R)-lipoyl]-L-lysyl-[glycine-cleavage complex H protein] + glycine + H(+) = N(6)-[(R)-S(8)-aminomethyldihydrolipoyl]-L-lysyl-[glycine-cleavage complex H protein] + CO2</text>
        <dbReference type="Rhea" id="RHEA:24304"/>
        <dbReference type="Rhea" id="RHEA-COMP:10494"/>
        <dbReference type="Rhea" id="RHEA-COMP:10495"/>
        <dbReference type="ChEBI" id="CHEBI:15378"/>
        <dbReference type="ChEBI" id="CHEBI:16526"/>
        <dbReference type="ChEBI" id="CHEBI:57305"/>
        <dbReference type="ChEBI" id="CHEBI:83099"/>
        <dbReference type="ChEBI" id="CHEBI:83143"/>
        <dbReference type="EC" id="1.4.4.2"/>
    </reaction>
</comment>
<comment type="subunit">
    <text evidence="1">The glycine cleavage system is composed of four proteins: P, T, L and H. In this organism, the P 'protein' is a heterodimer of two subunits.</text>
</comment>
<comment type="similarity">
    <text evidence="1">Belongs to the GcvP family. N-terminal subunit subfamily.</text>
</comment>
<organism>
    <name type="scientific">Staphylococcus aureus (strain JH9)</name>
    <dbReference type="NCBI Taxonomy" id="359786"/>
    <lineage>
        <taxon>Bacteria</taxon>
        <taxon>Bacillati</taxon>
        <taxon>Bacillota</taxon>
        <taxon>Bacilli</taxon>
        <taxon>Bacillales</taxon>
        <taxon>Staphylococcaceae</taxon>
        <taxon>Staphylococcus</taxon>
    </lineage>
</organism>